<reference key="1">
    <citation type="submission" date="2006-12" db="EMBL/GenBank/DDBJ databases">
        <title>Complete sequence of chromosome 1 of Verminephrobacter eiseniae EF01-2.</title>
        <authorList>
            <person name="Copeland A."/>
            <person name="Lucas S."/>
            <person name="Lapidus A."/>
            <person name="Barry K."/>
            <person name="Detter J.C."/>
            <person name="Glavina del Rio T."/>
            <person name="Dalin E."/>
            <person name="Tice H."/>
            <person name="Pitluck S."/>
            <person name="Chertkov O."/>
            <person name="Brettin T."/>
            <person name="Bruce D."/>
            <person name="Han C."/>
            <person name="Tapia R."/>
            <person name="Gilna P."/>
            <person name="Schmutz J."/>
            <person name="Larimer F."/>
            <person name="Land M."/>
            <person name="Hauser L."/>
            <person name="Kyrpides N."/>
            <person name="Kim E."/>
            <person name="Stahl D."/>
            <person name="Richardson P."/>
        </authorList>
    </citation>
    <scope>NUCLEOTIDE SEQUENCE [LARGE SCALE GENOMIC DNA]</scope>
    <source>
        <strain>EF01-2</strain>
    </source>
</reference>
<feature type="chain" id="PRO_1000049761" description="Large ribosomal subunit protein bL19">
    <location>
        <begin position="1"/>
        <end position="128"/>
    </location>
</feature>
<keyword id="KW-1185">Reference proteome</keyword>
<keyword id="KW-0687">Ribonucleoprotein</keyword>
<keyword id="KW-0689">Ribosomal protein</keyword>
<accession>A1WG50</accession>
<proteinExistence type="inferred from homology"/>
<gene>
    <name evidence="1" type="primary">rplS</name>
    <name type="ordered locus">Veis_0827</name>
</gene>
<evidence type="ECO:0000255" key="1">
    <source>
        <dbReference type="HAMAP-Rule" id="MF_00402"/>
    </source>
</evidence>
<evidence type="ECO:0000305" key="2"/>
<protein>
    <recommendedName>
        <fullName evidence="1">Large ribosomal subunit protein bL19</fullName>
    </recommendedName>
    <alternativeName>
        <fullName evidence="2">50S ribosomal protein L19</fullName>
    </alternativeName>
</protein>
<organism>
    <name type="scientific">Verminephrobacter eiseniae (strain EF01-2)</name>
    <dbReference type="NCBI Taxonomy" id="391735"/>
    <lineage>
        <taxon>Bacteria</taxon>
        <taxon>Pseudomonadati</taxon>
        <taxon>Pseudomonadota</taxon>
        <taxon>Betaproteobacteria</taxon>
        <taxon>Burkholderiales</taxon>
        <taxon>Comamonadaceae</taxon>
        <taxon>Verminephrobacter</taxon>
    </lineage>
</organism>
<comment type="function">
    <text evidence="1">This protein is located at the 30S-50S ribosomal subunit interface and may play a role in the structure and function of the aminoacyl-tRNA binding site.</text>
</comment>
<comment type="similarity">
    <text evidence="1">Belongs to the bacterial ribosomal protein bL19 family.</text>
</comment>
<name>RL19_VEREI</name>
<dbReference type="EMBL" id="CP000542">
    <property type="protein sequence ID" value="ABM56607.1"/>
    <property type="molecule type" value="Genomic_DNA"/>
</dbReference>
<dbReference type="RefSeq" id="WP_011808621.1">
    <property type="nucleotide sequence ID" value="NC_008786.1"/>
</dbReference>
<dbReference type="SMR" id="A1WG50"/>
<dbReference type="STRING" id="391735.Veis_0827"/>
<dbReference type="GeneID" id="76459509"/>
<dbReference type="KEGG" id="vei:Veis_0827"/>
<dbReference type="eggNOG" id="COG0335">
    <property type="taxonomic scope" value="Bacteria"/>
</dbReference>
<dbReference type="HOGENOM" id="CLU_103507_1_0_4"/>
<dbReference type="OrthoDB" id="9803541at2"/>
<dbReference type="Proteomes" id="UP000000374">
    <property type="component" value="Chromosome"/>
</dbReference>
<dbReference type="GO" id="GO:0022625">
    <property type="term" value="C:cytosolic large ribosomal subunit"/>
    <property type="evidence" value="ECO:0007669"/>
    <property type="project" value="TreeGrafter"/>
</dbReference>
<dbReference type="GO" id="GO:0003735">
    <property type="term" value="F:structural constituent of ribosome"/>
    <property type="evidence" value="ECO:0007669"/>
    <property type="project" value="InterPro"/>
</dbReference>
<dbReference type="GO" id="GO:0006412">
    <property type="term" value="P:translation"/>
    <property type="evidence" value="ECO:0007669"/>
    <property type="project" value="UniProtKB-UniRule"/>
</dbReference>
<dbReference type="FunFam" id="2.30.30.790:FF:000001">
    <property type="entry name" value="50S ribosomal protein L19"/>
    <property type="match status" value="1"/>
</dbReference>
<dbReference type="Gene3D" id="2.30.30.790">
    <property type="match status" value="1"/>
</dbReference>
<dbReference type="HAMAP" id="MF_00402">
    <property type="entry name" value="Ribosomal_bL19"/>
    <property type="match status" value="1"/>
</dbReference>
<dbReference type="InterPro" id="IPR001857">
    <property type="entry name" value="Ribosomal_bL19"/>
</dbReference>
<dbReference type="InterPro" id="IPR018257">
    <property type="entry name" value="Ribosomal_bL19_CS"/>
</dbReference>
<dbReference type="InterPro" id="IPR038657">
    <property type="entry name" value="Ribosomal_bL19_sf"/>
</dbReference>
<dbReference type="InterPro" id="IPR008991">
    <property type="entry name" value="Translation_prot_SH3-like_sf"/>
</dbReference>
<dbReference type="NCBIfam" id="TIGR01024">
    <property type="entry name" value="rplS_bact"/>
    <property type="match status" value="1"/>
</dbReference>
<dbReference type="PANTHER" id="PTHR15680:SF9">
    <property type="entry name" value="LARGE RIBOSOMAL SUBUNIT PROTEIN BL19M"/>
    <property type="match status" value="1"/>
</dbReference>
<dbReference type="PANTHER" id="PTHR15680">
    <property type="entry name" value="RIBOSOMAL PROTEIN L19"/>
    <property type="match status" value="1"/>
</dbReference>
<dbReference type="Pfam" id="PF01245">
    <property type="entry name" value="Ribosomal_L19"/>
    <property type="match status" value="1"/>
</dbReference>
<dbReference type="PIRSF" id="PIRSF002191">
    <property type="entry name" value="Ribosomal_L19"/>
    <property type="match status" value="1"/>
</dbReference>
<dbReference type="PRINTS" id="PR00061">
    <property type="entry name" value="RIBOSOMALL19"/>
</dbReference>
<dbReference type="SUPFAM" id="SSF50104">
    <property type="entry name" value="Translation proteins SH3-like domain"/>
    <property type="match status" value="1"/>
</dbReference>
<dbReference type="PROSITE" id="PS01015">
    <property type="entry name" value="RIBOSOMAL_L19"/>
    <property type="match status" value="1"/>
</dbReference>
<sequence>MNLIQTLEAEEIARLNKTIPDFSAGDTVIVNVNVVEGSRKRVQAYEGVVIAKRNRGLNSGFIVRKISSGEGVERTFQTYSPLIASIEVKRRGDVRRAKLYYLRERSGKSARIKEKLPARTKAAAASAA</sequence>